<comment type="function">
    <text evidence="1">Plays an essential role in the initiation and regulation of chromosomal replication. ATP-DnaA binds to the origin of replication (oriC) to initiate formation of the DNA replication initiation complex once per cell cycle. Binds the DnaA box (a 9 base pair repeat at the origin) and separates the double-stranded (ds)DNA. Forms a right-handed helical filament on oriC DNA; dsDNA binds to the exterior of the filament while single-stranded (ss)DNA is stabiized in the filament's interior. The ATP-DnaA-oriC complex binds and stabilizes one strand of the AT-rich DNA unwinding element (DUE), permitting loading of DNA polymerase. After initiation quickly degrades to an ADP-DnaA complex that is not apt for DNA replication. Binds acidic phospholipids.</text>
</comment>
<comment type="subunit">
    <text evidence="1">Oligomerizes as a right-handed, spiral filament on DNA at oriC.</text>
</comment>
<comment type="subcellular location">
    <subcellularLocation>
        <location evidence="1">Cytoplasm</location>
    </subcellularLocation>
</comment>
<comment type="domain">
    <text evidence="1">Domain I is involved in oligomerization and binding regulators, domain II is flexibile and of varying length in different bacteria, domain III forms the AAA+ region, while domain IV binds dsDNA.</text>
</comment>
<comment type="similarity">
    <text evidence="1">Belongs to the DnaA family.</text>
</comment>
<feature type="chain" id="PRO_0000114309" description="Chromosomal replication initiator protein DnaA">
    <location>
        <begin position="1"/>
        <end position="439"/>
    </location>
</feature>
<feature type="region of interest" description="Domain I, interacts with DnaA modulators" evidence="1">
    <location>
        <begin position="1"/>
        <end position="75"/>
    </location>
</feature>
<feature type="region of interest" description="Domain II" evidence="1">
    <location>
        <begin position="75"/>
        <end position="101"/>
    </location>
</feature>
<feature type="region of interest" description="Domain III, AAA+ region" evidence="1">
    <location>
        <begin position="102"/>
        <end position="319"/>
    </location>
</feature>
<feature type="region of interest" description="Domain IV, binds dsDNA" evidence="1">
    <location>
        <begin position="320"/>
        <end position="439"/>
    </location>
</feature>
<feature type="binding site" evidence="1">
    <location>
        <position position="147"/>
    </location>
    <ligand>
        <name>ATP</name>
        <dbReference type="ChEBI" id="CHEBI:30616"/>
    </ligand>
</feature>
<feature type="binding site" evidence="1">
    <location>
        <position position="149"/>
    </location>
    <ligand>
        <name>ATP</name>
        <dbReference type="ChEBI" id="CHEBI:30616"/>
    </ligand>
</feature>
<feature type="binding site" evidence="1">
    <location>
        <position position="150"/>
    </location>
    <ligand>
        <name>ATP</name>
        <dbReference type="ChEBI" id="CHEBI:30616"/>
    </ligand>
</feature>
<feature type="binding site" evidence="1">
    <location>
        <position position="151"/>
    </location>
    <ligand>
        <name>ATP</name>
        <dbReference type="ChEBI" id="CHEBI:30616"/>
    </ligand>
</feature>
<proteinExistence type="inferred from homology"/>
<gene>
    <name evidence="1" type="primary">dnaA</name>
    <name type="ordered locus">PD_0001</name>
</gene>
<accession>Q87FC6</accession>
<evidence type="ECO:0000255" key="1">
    <source>
        <dbReference type="HAMAP-Rule" id="MF_00377"/>
    </source>
</evidence>
<organism>
    <name type="scientific">Xylella fastidiosa (strain Temecula1 / ATCC 700964)</name>
    <dbReference type="NCBI Taxonomy" id="183190"/>
    <lineage>
        <taxon>Bacteria</taxon>
        <taxon>Pseudomonadati</taxon>
        <taxon>Pseudomonadota</taxon>
        <taxon>Gammaproteobacteria</taxon>
        <taxon>Lysobacterales</taxon>
        <taxon>Lysobacteraceae</taxon>
        <taxon>Xylella</taxon>
    </lineage>
</organism>
<dbReference type="EMBL" id="AE009442">
    <property type="protein sequence ID" value="AAO27909.1"/>
    <property type="molecule type" value="Genomic_DNA"/>
</dbReference>
<dbReference type="RefSeq" id="WP_011097471.1">
    <property type="nucleotide sequence ID" value="NC_004556.1"/>
</dbReference>
<dbReference type="SMR" id="Q87FC6"/>
<dbReference type="GeneID" id="93903692"/>
<dbReference type="KEGG" id="xft:PD_0001"/>
<dbReference type="HOGENOM" id="CLU_026910_0_1_6"/>
<dbReference type="Proteomes" id="UP000002516">
    <property type="component" value="Chromosome"/>
</dbReference>
<dbReference type="GO" id="GO:0005737">
    <property type="term" value="C:cytoplasm"/>
    <property type="evidence" value="ECO:0007669"/>
    <property type="project" value="UniProtKB-SubCell"/>
</dbReference>
<dbReference type="GO" id="GO:0005886">
    <property type="term" value="C:plasma membrane"/>
    <property type="evidence" value="ECO:0007669"/>
    <property type="project" value="TreeGrafter"/>
</dbReference>
<dbReference type="GO" id="GO:0005524">
    <property type="term" value="F:ATP binding"/>
    <property type="evidence" value="ECO:0007669"/>
    <property type="project" value="UniProtKB-UniRule"/>
</dbReference>
<dbReference type="GO" id="GO:0016887">
    <property type="term" value="F:ATP hydrolysis activity"/>
    <property type="evidence" value="ECO:0007669"/>
    <property type="project" value="InterPro"/>
</dbReference>
<dbReference type="GO" id="GO:0003688">
    <property type="term" value="F:DNA replication origin binding"/>
    <property type="evidence" value="ECO:0007669"/>
    <property type="project" value="UniProtKB-UniRule"/>
</dbReference>
<dbReference type="GO" id="GO:0008289">
    <property type="term" value="F:lipid binding"/>
    <property type="evidence" value="ECO:0007669"/>
    <property type="project" value="UniProtKB-KW"/>
</dbReference>
<dbReference type="GO" id="GO:0006270">
    <property type="term" value="P:DNA replication initiation"/>
    <property type="evidence" value="ECO:0007669"/>
    <property type="project" value="UniProtKB-UniRule"/>
</dbReference>
<dbReference type="GO" id="GO:0006275">
    <property type="term" value="P:regulation of DNA replication"/>
    <property type="evidence" value="ECO:0007669"/>
    <property type="project" value="UniProtKB-UniRule"/>
</dbReference>
<dbReference type="CDD" id="cd06571">
    <property type="entry name" value="Bac_DnaA_C"/>
    <property type="match status" value="1"/>
</dbReference>
<dbReference type="FunFam" id="1.10.8.60:FF:000003">
    <property type="entry name" value="Chromosomal replication initiator protein DnaA"/>
    <property type="match status" value="1"/>
</dbReference>
<dbReference type="FunFam" id="3.40.50.300:FF:000103">
    <property type="entry name" value="Chromosomal replication initiator protein DnaA"/>
    <property type="match status" value="1"/>
</dbReference>
<dbReference type="Gene3D" id="1.10.1750.10">
    <property type="match status" value="1"/>
</dbReference>
<dbReference type="Gene3D" id="1.10.8.60">
    <property type="match status" value="1"/>
</dbReference>
<dbReference type="Gene3D" id="3.30.300.180">
    <property type="match status" value="1"/>
</dbReference>
<dbReference type="Gene3D" id="3.40.50.300">
    <property type="entry name" value="P-loop containing nucleotide triphosphate hydrolases"/>
    <property type="match status" value="1"/>
</dbReference>
<dbReference type="HAMAP" id="MF_00377">
    <property type="entry name" value="DnaA_bact"/>
    <property type="match status" value="1"/>
</dbReference>
<dbReference type="InterPro" id="IPR003593">
    <property type="entry name" value="AAA+_ATPase"/>
</dbReference>
<dbReference type="InterPro" id="IPR001957">
    <property type="entry name" value="Chromosome_initiator_DnaA"/>
</dbReference>
<dbReference type="InterPro" id="IPR020591">
    <property type="entry name" value="Chromosome_initiator_DnaA-like"/>
</dbReference>
<dbReference type="InterPro" id="IPR018312">
    <property type="entry name" value="Chromosome_initiator_DnaA_CS"/>
</dbReference>
<dbReference type="InterPro" id="IPR013159">
    <property type="entry name" value="DnaA_C"/>
</dbReference>
<dbReference type="InterPro" id="IPR013317">
    <property type="entry name" value="DnaA_dom"/>
</dbReference>
<dbReference type="InterPro" id="IPR024633">
    <property type="entry name" value="DnaA_N_dom"/>
</dbReference>
<dbReference type="InterPro" id="IPR038454">
    <property type="entry name" value="DnaA_N_sf"/>
</dbReference>
<dbReference type="InterPro" id="IPR027417">
    <property type="entry name" value="P-loop_NTPase"/>
</dbReference>
<dbReference type="InterPro" id="IPR010921">
    <property type="entry name" value="Trp_repressor/repl_initiator"/>
</dbReference>
<dbReference type="NCBIfam" id="TIGR00362">
    <property type="entry name" value="DnaA"/>
    <property type="match status" value="1"/>
</dbReference>
<dbReference type="PANTHER" id="PTHR30050">
    <property type="entry name" value="CHROMOSOMAL REPLICATION INITIATOR PROTEIN DNAA"/>
    <property type="match status" value="1"/>
</dbReference>
<dbReference type="PANTHER" id="PTHR30050:SF2">
    <property type="entry name" value="CHROMOSOMAL REPLICATION INITIATOR PROTEIN DNAA"/>
    <property type="match status" value="1"/>
</dbReference>
<dbReference type="Pfam" id="PF00308">
    <property type="entry name" value="Bac_DnaA"/>
    <property type="match status" value="1"/>
</dbReference>
<dbReference type="Pfam" id="PF08299">
    <property type="entry name" value="Bac_DnaA_C"/>
    <property type="match status" value="1"/>
</dbReference>
<dbReference type="Pfam" id="PF11638">
    <property type="entry name" value="DnaA_N"/>
    <property type="match status" value="1"/>
</dbReference>
<dbReference type="PRINTS" id="PR00051">
    <property type="entry name" value="DNAA"/>
</dbReference>
<dbReference type="SMART" id="SM00382">
    <property type="entry name" value="AAA"/>
    <property type="match status" value="1"/>
</dbReference>
<dbReference type="SMART" id="SM00760">
    <property type="entry name" value="Bac_DnaA_C"/>
    <property type="match status" value="1"/>
</dbReference>
<dbReference type="SUPFAM" id="SSF52540">
    <property type="entry name" value="P-loop containing nucleoside triphosphate hydrolases"/>
    <property type="match status" value="1"/>
</dbReference>
<dbReference type="SUPFAM" id="SSF48295">
    <property type="entry name" value="TrpR-like"/>
    <property type="match status" value="1"/>
</dbReference>
<dbReference type="PROSITE" id="PS01008">
    <property type="entry name" value="DNAA"/>
    <property type="match status" value="1"/>
</dbReference>
<sequence>MESWSRCLERLETEFPPEDVHTWLRPLQADQRGDSVILYAPNTFIIELVEERYLGRLRELLSYFSGIREVVLAIGSRPKTTELTVPVDTTGRLSQTVPFNGNLDTHYNFDNFVEGRSNQLARAAAWQAAQKPGDRTHNPLLLYGGTGLGKTHLMFAAGNVMRQVNPTYKVMYLRSEQFFSAMIRALQDKSMDQFKRQFHQIDALLIDDIQFFAGKDRTQEEFFHTFNALFDGKQQIILTCDRYPREVNGLEPRLKSRLAWGLSVAIDPPDFETRAAIVLAKARERGATIPDEVAFLIAKKMHSNVRDLEGALNTLVARANFTGRAVTIEFSQETLRDLLRAQQQTIGIPNIQKIVADYYGLQIKDLLSKRRTRSLARPRQLAMALAKELTEHSLPEIGDAFAGRDHTTVLHACRQIKLLMETETKLREDWDKLMRKFSE</sequence>
<protein>
    <recommendedName>
        <fullName evidence="1">Chromosomal replication initiator protein DnaA</fullName>
    </recommendedName>
</protein>
<keyword id="KW-0067">ATP-binding</keyword>
<keyword id="KW-0963">Cytoplasm</keyword>
<keyword id="KW-0235">DNA replication</keyword>
<keyword id="KW-0238">DNA-binding</keyword>
<keyword id="KW-0446">Lipid-binding</keyword>
<keyword id="KW-0547">Nucleotide-binding</keyword>
<keyword id="KW-1185">Reference proteome</keyword>
<reference key="1">
    <citation type="journal article" date="2003" name="J. Bacteriol.">
        <title>Comparative analyses of the complete genome sequences of Pierce's disease and citrus variegated chlorosis strains of Xylella fastidiosa.</title>
        <authorList>
            <person name="Van Sluys M.A."/>
            <person name="de Oliveira M.C."/>
            <person name="Monteiro-Vitorello C.B."/>
            <person name="Miyaki C.Y."/>
            <person name="Furlan L.R."/>
            <person name="Camargo L.E.A."/>
            <person name="da Silva A.C.R."/>
            <person name="Moon D.H."/>
            <person name="Takita M.A."/>
            <person name="Lemos E.G.M."/>
            <person name="Machado M.A."/>
            <person name="Ferro M.I.T."/>
            <person name="da Silva F.R."/>
            <person name="Goldman M.H.S."/>
            <person name="Goldman G.H."/>
            <person name="Lemos M.V.F."/>
            <person name="El-Dorry H."/>
            <person name="Tsai S.M."/>
            <person name="Carrer H."/>
            <person name="Carraro D.M."/>
            <person name="de Oliveira R.C."/>
            <person name="Nunes L.R."/>
            <person name="Siqueira W.J."/>
            <person name="Coutinho L.L."/>
            <person name="Kimura E.T."/>
            <person name="Ferro E.S."/>
            <person name="Harakava R."/>
            <person name="Kuramae E.E."/>
            <person name="Marino C.L."/>
            <person name="Giglioti E."/>
            <person name="Abreu I.L."/>
            <person name="Alves L.M.C."/>
            <person name="do Amaral A.M."/>
            <person name="Baia G.S."/>
            <person name="Blanco S.R."/>
            <person name="Brito M.S."/>
            <person name="Cannavan F.S."/>
            <person name="Celestino A.V."/>
            <person name="da Cunha A.F."/>
            <person name="Fenille R.C."/>
            <person name="Ferro J.A."/>
            <person name="Formighieri E.F."/>
            <person name="Kishi L.T."/>
            <person name="Leoni S.G."/>
            <person name="Oliveira A.R."/>
            <person name="Rosa V.E. Jr."/>
            <person name="Sassaki F.T."/>
            <person name="Sena J.A.D."/>
            <person name="de Souza A.A."/>
            <person name="Truffi D."/>
            <person name="Tsukumo F."/>
            <person name="Yanai G.M."/>
            <person name="Zaros L.G."/>
            <person name="Civerolo E.L."/>
            <person name="Simpson A.J.G."/>
            <person name="Almeida N.F. Jr."/>
            <person name="Setubal J.C."/>
            <person name="Kitajima J.P."/>
        </authorList>
    </citation>
    <scope>NUCLEOTIDE SEQUENCE [LARGE SCALE GENOMIC DNA]</scope>
    <source>
        <strain>Temecula1 / ATCC 700964</strain>
    </source>
</reference>
<name>DNAA_XYLFT</name>